<reference key="1">
    <citation type="submission" date="2008-02" db="EMBL/GenBank/DDBJ databases">
        <title>Complete sequence of Yersinia pseudotuberculosis YPIII.</title>
        <authorList>
            <consortium name="US DOE Joint Genome Institute"/>
            <person name="Copeland A."/>
            <person name="Lucas S."/>
            <person name="Lapidus A."/>
            <person name="Glavina del Rio T."/>
            <person name="Dalin E."/>
            <person name="Tice H."/>
            <person name="Bruce D."/>
            <person name="Goodwin L."/>
            <person name="Pitluck S."/>
            <person name="Munk A.C."/>
            <person name="Brettin T."/>
            <person name="Detter J.C."/>
            <person name="Han C."/>
            <person name="Tapia R."/>
            <person name="Schmutz J."/>
            <person name="Larimer F."/>
            <person name="Land M."/>
            <person name="Hauser L."/>
            <person name="Challacombe J.F."/>
            <person name="Green L."/>
            <person name="Lindler L.E."/>
            <person name="Nikolich M.P."/>
            <person name="Richardson P."/>
        </authorList>
    </citation>
    <scope>NUCLEOTIDE SEQUENCE [LARGE SCALE GENOMIC DNA]</scope>
    <source>
        <strain>YPIII</strain>
    </source>
</reference>
<sequence length="91" mass="10165">MARVTVQDAVEKIGNRFDLVLVAARRARQIQSGGKDALVPEENDKVTVIALREIEEGLITNQILDVRERQEQQEQEAAEIQAVTAIAEGRR</sequence>
<evidence type="ECO:0000255" key="1">
    <source>
        <dbReference type="HAMAP-Rule" id="MF_00366"/>
    </source>
</evidence>
<comment type="function">
    <text evidence="1">Promotes RNA polymerase assembly. Latches the N- and C-terminal regions of the beta' subunit thereby facilitating its interaction with the beta and alpha subunits.</text>
</comment>
<comment type="catalytic activity">
    <reaction evidence="1">
        <text>RNA(n) + a ribonucleoside 5'-triphosphate = RNA(n+1) + diphosphate</text>
        <dbReference type="Rhea" id="RHEA:21248"/>
        <dbReference type="Rhea" id="RHEA-COMP:14527"/>
        <dbReference type="Rhea" id="RHEA-COMP:17342"/>
        <dbReference type="ChEBI" id="CHEBI:33019"/>
        <dbReference type="ChEBI" id="CHEBI:61557"/>
        <dbReference type="ChEBI" id="CHEBI:140395"/>
        <dbReference type="EC" id="2.7.7.6"/>
    </reaction>
</comment>
<comment type="subunit">
    <text evidence="1">The RNAP catalytic core consists of 2 alpha, 1 beta, 1 beta' and 1 omega subunit. When a sigma factor is associated with the core the holoenzyme is formed, which can initiate transcription.</text>
</comment>
<comment type="similarity">
    <text evidence="1">Belongs to the RNA polymerase subunit omega family.</text>
</comment>
<proteinExistence type="inferred from homology"/>
<keyword id="KW-0240">DNA-directed RNA polymerase</keyword>
<keyword id="KW-0548">Nucleotidyltransferase</keyword>
<keyword id="KW-0804">Transcription</keyword>
<keyword id="KW-0808">Transferase</keyword>
<gene>
    <name evidence="1" type="primary">rpoZ</name>
    <name type="ordered locus">YPK_4177</name>
</gene>
<dbReference type="EC" id="2.7.7.6" evidence="1"/>
<dbReference type="EMBL" id="CP000950">
    <property type="protein sequence ID" value="ACA70436.1"/>
    <property type="molecule type" value="Genomic_DNA"/>
</dbReference>
<dbReference type="RefSeq" id="WP_004392061.1">
    <property type="nucleotide sequence ID" value="NZ_CP009792.1"/>
</dbReference>
<dbReference type="SMR" id="B1JQZ5"/>
<dbReference type="GeneID" id="97458311"/>
<dbReference type="KEGG" id="ypy:YPK_4177"/>
<dbReference type="PATRIC" id="fig|502800.11.peg.528"/>
<dbReference type="GO" id="GO:0000428">
    <property type="term" value="C:DNA-directed RNA polymerase complex"/>
    <property type="evidence" value="ECO:0007669"/>
    <property type="project" value="UniProtKB-KW"/>
</dbReference>
<dbReference type="GO" id="GO:0003677">
    <property type="term" value="F:DNA binding"/>
    <property type="evidence" value="ECO:0007669"/>
    <property type="project" value="UniProtKB-UniRule"/>
</dbReference>
<dbReference type="GO" id="GO:0003899">
    <property type="term" value="F:DNA-directed RNA polymerase activity"/>
    <property type="evidence" value="ECO:0007669"/>
    <property type="project" value="UniProtKB-UniRule"/>
</dbReference>
<dbReference type="GO" id="GO:0006351">
    <property type="term" value="P:DNA-templated transcription"/>
    <property type="evidence" value="ECO:0007669"/>
    <property type="project" value="UniProtKB-UniRule"/>
</dbReference>
<dbReference type="FunFam" id="3.90.940.10:FF:000001">
    <property type="entry name" value="DNA-directed RNA polymerase subunit omega"/>
    <property type="match status" value="1"/>
</dbReference>
<dbReference type="Gene3D" id="3.90.940.10">
    <property type="match status" value="1"/>
</dbReference>
<dbReference type="HAMAP" id="MF_00366">
    <property type="entry name" value="RNApol_bact_RpoZ"/>
    <property type="match status" value="1"/>
</dbReference>
<dbReference type="InterPro" id="IPR003716">
    <property type="entry name" value="DNA-dir_RNA_pol_omega"/>
</dbReference>
<dbReference type="InterPro" id="IPR006110">
    <property type="entry name" value="Pol_omega/Rpo6/RPB6"/>
</dbReference>
<dbReference type="InterPro" id="IPR036161">
    <property type="entry name" value="RPB6/omega-like_sf"/>
</dbReference>
<dbReference type="NCBIfam" id="TIGR00690">
    <property type="entry name" value="rpoZ"/>
    <property type="match status" value="1"/>
</dbReference>
<dbReference type="PANTHER" id="PTHR34476">
    <property type="entry name" value="DNA-DIRECTED RNA POLYMERASE SUBUNIT OMEGA"/>
    <property type="match status" value="1"/>
</dbReference>
<dbReference type="PANTHER" id="PTHR34476:SF1">
    <property type="entry name" value="DNA-DIRECTED RNA POLYMERASE SUBUNIT OMEGA"/>
    <property type="match status" value="1"/>
</dbReference>
<dbReference type="Pfam" id="PF01192">
    <property type="entry name" value="RNA_pol_Rpb6"/>
    <property type="match status" value="1"/>
</dbReference>
<dbReference type="SMART" id="SM01409">
    <property type="entry name" value="RNA_pol_Rpb6"/>
    <property type="match status" value="1"/>
</dbReference>
<dbReference type="SUPFAM" id="SSF63562">
    <property type="entry name" value="RPB6/omega subunit-like"/>
    <property type="match status" value="1"/>
</dbReference>
<organism>
    <name type="scientific">Yersinia pseudotuberculosis serotype O:3 (strain YPIII)</name>
    <dbReference type="NCBI Taxonomy" id="502800"/>
    <lineage>
        <taxon>Bacteria</taxon>
        <taxon>Pseudomonadati</taxon>
        <taxon>Pseudomonadota</taxon>
        <taxon>Gammaproteobacteria</taxon>
        <taxon>Enterobacterales</taxon>
        <taxon>Yersiniaceae</taxon>
        <taxon>Yersinia</taxon>
    </lineage>
</organism>
<accession>B1JQZ5</accession>
<feature type="chain" id="PRO_1000121295" description="DNA-directed RNA polymerase subunit omega">
    <location>
        <begin position="1"/>
        <end position="91"/>
    </location>
</feature>
<name>RPOZ_YERPY</name>
<protein>
    <recommendedName>
        <fullName evidence="1">DNA-directed RNA polymerase subunit omega</fullName>
        <shortName evidence="1">RNAP omega subunit</shortName>
        <ecNumber evidence="1">2.7.7.6</ecNumber>
    </recommendedName>
    <alternativeName>
        <fullName evidence="1">RNA polymerase omega subunit</fullName>
    </alternativeName>
    <alternativeName>
        <fullName evidence="1">Transcriptase subunit omega</fullName>
    </alternativeName>
</protein>